<dbReference type="EMBL" id="CP000255">
    <property type="protein sequence ID" value="ABD22589.1"/>
    <property type="molecule type" value="Genomic_DNA"/>
</dbReference>
<dbReference type="RefSeq" id="WP_000654185.1">
    <property type="nucleotide sequence ID" value="NZ_CP027476.1"/>
</dbReference>
<dbReference type="SMR" id="Q2FF14"/>
<dbReference type="KEGG" id="saa:SAUSA300_2068"/>
<dbReference type="HOGENOM" id="CLU_106658_0_0_9"/>
<dbReference type="OMA" id="FIGMHLR"/>
<dbReference type="Proteomes" id="UP000001939">
    <property type="component" value="Chromosome"/>
</dbReference>
<dbReference type="Gene3D" id="3.40.50.10360">
    <property type="entry name" value="Hypothetical protein TT1679"/>
    <property type="match status" value="1"/>
</dbReference>
<dbReference type="HAMAP" id="MF_00800">
    <property type="entry name" value="UPF0340"/>
    <property type="match status" value="1"/>
</dbReference>
<dbReference type="InterPro" id="IPR028345">
    <property type="entry name" value="Antibiotic_NAT-like"/>
</dbReference>
<dbReference type="InterPro" id="IPR006340">
    <property type="entry name" value="DUF436"/>
</dbReference>
<dbReference type="NCBIfam" id="TIGR01440">
    <property type="entry name" value="TIGR01440 family protein"/>
    <property type="match status" value="1"/>
</dbReference>
<dbReference type="Pfam" id="PF04260">
    <property type="entry name" value="DUF436"/>
    <property type="match status" value="1"/>
</dbReference>
<dbReference type="PIRSF" id="PIRSF007510">
    <property type="entry name" value="UCP007510"/>
    <property type="match status" value="1"/>
</dbReference>
<dbReference type="SUPFAM" id="SSF110710">
    <property type="entry name" value="TTHA0583/YokD-like"/>
    <property type="match status" value="1"/>
</dbReference>
<accession>Q2FF14</accession>
<organism>
    <name type="scientific">Staphylococcus aureus (strain USA300)</name>
    <dbReference type="NCBI Taxonomy" id="367830"/>
    <lineage>
        <taxon>Bacteria</taxon>
        <taxon>Bacillati</taxon>
        <taxon>Bacillota</taxon>
        <taxon>Bacilli</taxon>
        <taxon>Bacillales</taxon>
        <taxon>Staphylococcaceae</taxon>
        <taxon>Staphylococcus</taxon>
    </lineage>
</organism>
<sequence length="174" mass="18895">MKDLTMLLDELKDMSFFNKGDICLIGCSTSEVIGEKIGTVGSMEVAETIFNALDVVSKETGVTFAFQGCEHINRAITIEKSQYNPLTMEEVSVVPDVHAGGSLATYAFQHMKDPIVVEHITVPCGIDIGQTLIGMHIKHVCVPVRTSVKQVGQAIVTIATSRPKKIGGERAKYQ</sequence>
<protein>
    <recommendedName>
        <fullName evidence="1">UPF0340 protein SAUSA300_2068</fullName>
    </recommendedName>
</protein>
<reference key="1">
    <citation type="journal article" date="2006" name="Lancet">
        <title>Complete genome sequence of USA300, an epidemic clone of community-acquired meticillin-resistant Staphylococcus aureus.</title>
        <authorList>
            <person name="Diep B.A."/>
            <person name="Gill S.R."/>
            <person name="Chang R.F."/>
            <person name="Phan T.H."/>
            <person name="Chen J.H."/>
            <person name="Davidson M.G."/>
            <person name="Lin F."/>
            <person name="Lin J."/>
            <person name="Carleton H.A."/>
            <person name="Mongodin E.F."/>
            <person name="Sensabaugh G.F."/>
            <person name="Perdreau-Remington F."/>
        </authorList>
    </citation>
    <scope>NUCLEOTIDE SEQUENCE [LARGE SCALE GENOMIC DNA]</scope>
    <source>
        <strain>USA300</strain>
    </source>
</reference>
<proteinExistence type="inferred from homology"/>
<feature type="chain" id="PRO_1000046979" description="UPF0340 protein SAUSA300_2068">
    <location>
        <begin position="1"/>
        <end position="174"/>
    </location>
</feature>
<comment type="similarity">
    <text evidence="1">Belongs to the UPF0340 family.</text>
</comment>
<evidence type="ECO:0000255" key="1">
    <source>
        <dbReference type="HAMAP-Rule" id="MF_00800"/>
    </source>
</evidence>
<name>Y2068_STAA3</name>
<gene>
    <name type="ordered locus">SAUSA300_2068</name>
</gene>